<dbReference type="EMBL" id="BX640425">
    <property type="protein sequence ID" value="CAE40268.1"/>
    <property type="molecule type" value="Genomic_DNA"/>
</dbReference>
<dbReference type="RefSeq" id="WP_003808599.1">
    <property type="nucleotide sequence ID" value="NC_002928.3"/>
</dbReference>
<dbReference type="SMR" id="Q7W142"/>
<dbReference type="GeneID" id="69600515"/>
<dbReference type="GeneID" id="93202609"/>
<dbReference type="KEGG" id="bpa:BPP0859"/>
<dbReference type="HOGENOM" id="CLU_087843_4_1_4"/>
<dbReference type="Proteomes" id="UP000001421">
    <property type="component" value="Chromosome"/>
</dbReference>
<dbReference type="GO" id="GO:0005829">
    <property type="term" value="C:cytosol"/>
    <property type="evidence" value="ECO:0007669"/>
    <property type="project" value="TreeGrafter"/>
</dbReference>
<dbReference type="GO" id="GO:0003723">
    <property type="term" value="F:RNA binding"/>
    <property type="evidence" value="ECO:0007669"/>
    <property type="project" value="UniProtKB-UniRule"/>
</dbReference>
<dbReference type="GO" id="GO:0006353">
    <property type="term" value="P:DNA-templated transcription termination"/>
    <property type="evidence" value="ECO:0007669"/>
    <property type="project" value="UniProtKB-UniRule"/>
</dbReference>
<dbReference type="GO" id="GO:0031564">
    <property type="term" value="P:transcription antitermination"/>
    <property type="evidence" value="ECO:0007669"/>
    <property type="project" value="UniProtKB-KW"/>
</dbReference>
<dbReference type="Gene3D" id="1.10.940.10">
    <property type="entry name" value="NusB-like"/>
    <property type="match status" value="1"/>
</dbReference>
<dbReference type="HAMAP" id="MF_00073">
    <property type="entry name" value="NusB"/>
    <property type="match status" value="1"/>
</dbReference>
<dbReference type="InterPro" id="IPR035926">
    <property type="entry name" value="NusB-like_sf"/>
</dbReference>
<dbReference type="InterPro" id="IPR011605">
    <property type="entry name" value="NusB_fam"/>
</dbReference>
<dbReference type="InterPro" id="IPR006027">
    <property type="entry name" value="NusB_RsmB_TIM44"/>
</dbReference>
<dbReference type="NCBIfam" id="TIGR01951">
    <property type="entry name" value="nusB"/>
    <property type="match status" value="1"/>
</dbReference>
<dbReference type="PANTHER" id="PTHR11078:SF3">
    <property type="entry name" value="ANTITERMINATION NUSB DOMAIN-CONTAINING PROTEIN"/>
    <property type="match status" value="1"/>
</dbReference>
<dbReference type="PANTHER" id="PTHR11078">
    <property type="entry name" value="N UTILIZATION SUBSTANCE PROTEIN B-RELATED"/>
    <property type="match status" value="1"/>
</dbReference>
<dbReference type="Pfam" id="PF01029">
    <property type="entry name" value="NusB"/>
    <property type="match status" value="1"/>
</dbReference>
<dbReference type="SUPFAM" id="SSF48013">
    <property type="entry name" value="NusB-like"/>
    <property type="match status" value="1"/>
</dbReference>
<protein>
    <recommendedName>
        <fullName evidence="1">Transcription antitermination protein NusB</fullName>
    </recommendedName>
    <alternativeName>
        <fullName evidence="1">Antitermination factor NusB</fullName>
    </alternativeName>
</protein>
<sequence length="154" mass="17166">MQARANARSARRRAREFALQGVYAWLLRGGEGTQDAGEIDAHLRDAEDFSEADAQWFKTLLHGVLREAPVLRERFLPYIDRPLAELSPVEHGILLIGSFELMHHVEVPYKVAINEAVELAKSFGGTDGFKFVNGVLDKLAADVRTAEVQAAPRR</sequence>
<evidence type="ECO:0000255" key="1">
    <source>
        <dbReference type="HAMAP-Rule" id="MF_00073"/>
    </source>
</evidence>
<keyword id="KW-0694">RNA-binding</keyword>
<keyword id="KW-0804">Transcription</keyword>
<keyword id="KW-0889">Transcription antitermination</keyword>
<keyword id="KW-0805">Transcription regulation</keyword>
<reference key="1">
    <citation type="journal article" date="2003" name="Nat. Genet.">
        <title>Comparative analysis of the genome sequences of Bordetella pertussis, Bordetella parapertussis and Bordetella bronchiseptica.</title>
        <authorList>
            <person name="Parkhill J."/>
            <person name="Sebaihia M."/>
            <person name="Preston A."/>
            <person name="Murphy L.D."/>
            <person name="Thomson N.R."/>
            <person name="Harris D.E."/>
            <person name="Holden M.T.G."/>
            <person name="Churcher C.M."/>
            <person name="Bentley S.D."/>
            <person name="Mungall K.L."/>
            <person name="Cerdeno-Tarraga A.-M."/>
            <person name="Temple L."/>
            <person name="James K.D."/>
            <person name="Harris B."/>
            <person name="Quail M.A."/>
            <person name="Achtman M."/>
            <person name="Atkin R."/>
            <person name="Baker S."/>
            <person name="Basham D."/>
            <person name="Bason N."/>
            <person name="Cherevach I."/>
            <person name="Chillingworth T."/>
            <person name="Collins M."/>
            <person name="Cronin A."/>
            <person name="Davis P."/>
            <person name="Doggett J."/>
            <person name="Feltwell T."/>
            <person name="Goble A."/>
            <person name="Hamlin N."/>
            <person name="Hauser H."/>
            <person name="Holroyd S."/>
            <person name="Jagels K."/>
            <person name="Leather S."/>
            <person name="Moule S."/>
            <person name="Norberczak H."/>
            <person name="O'Neil S."/>
            <person name="Ormond D."/>
            <person name="Price C."/>
            <person name="Rabbinowitsch E."/>
            <person name="Rutter S."/>
            <person name="Sanders M."/>
            <person name="Saunders D."/>
            <person name="Seeger K."/>
            <person name="Sharp S."/>
            <person name="Simmonds M."/>
            <person name="Skelton J."/>
            <person name="Squares R."/>
            <person name="Squares S."/>
            <person name="Stevens K."/>
            <person name="Unwin L."/>
            <person name="Whitehead S."/>
            <person name="Barrell B.G."/>
            <person name="Maskell D.J."/>
        </authorList>
    </citation>
    <scope>NUCLEOTIDE SEQUENCE [LARGE SCALE GENOMIC DNA]</scope>
    <source>
        <strain>12822 / ATCC BAA-587 / NCTC 13253</strain>
    </source>
</reference>
<comment type="function">
    <text evidence="1">Involved in transcription antitermination. Required for transcription of ribosomal RNA (rRNA) genes. Binds specifically to the boxA antiterminator sequence of the ribosomal RNA (rrn) operons.</text>
</comment>
<comment type="similarity">
    <text evidence="1">Belongs to the NusB family.</text>
</comment>
<name>NUSB_BORPA</name>
<organism>
    <name type="scientific">Bordetella parapertussis (strain 12822 / ATCC BAA-587 / NCTC 13253)</name>
    <dbReference type="NCBI Taxonomy" id="257311"/>
    <lineage>
        <taxon>Bacteria</taxon>
        <taxon>Pseudomonadati</taxon>
        <taxon>Pseudomonadota</taxon>
        <taxon>Betaproteobacteria</taxon>
        <taxon>Burkholderiales</taxon>
        <taxon>Alcaligenaceae</taxon>
        <taxon>Bordetella</taxon>
    </lineage>
</organism>
<proteinExistence type="inferred from homology"/>
<gene>
    <name evidence="1" type="primary">nusB</name>
    <name type="ordered locus">BPP0859</name>
</gene>
<feature type="chain" id="PRO_0000176512" description="Transcription antitermination protein NusB">
    <location>
        <begin position="1"/>
        <end position="154"/>
    </location>
</feature>
<accession>Q7W142</accession>